<organism>
    <name type="scientific">Oryza sativa subsp. japonica</name>
    <name type="common">Rice</name>
    <dbReference type="NCBI Taxonomy" id="39947"/>
    <lineage>
        <taxon>Eukaryota</taxon>
        <taxon>Viridiplantae</taxon>
        <taxon>Streptophyta</taxon>
        <taxon>Embryophyta</taxon>
        <taxon>Tracheophyta</taxon>
        <taxon>Spermatophyta</taxon>
        <taxon>Magnoliopsida</taxon>
        <taxon>Liliopsida</taxon>
        <taxon>Poales</taxon>
        <taxon>Poaceae</taxon>
        <taxon>BOP clade</taxon>
        <taxon>Oryzoideae</taxon>
        <taxon>Oryzeae</taxon>
        <taxon>Oryzinae</taxon>
        <taxon>Oryza</taxon>
        <taxon>Oryza sativa</taxon>
    </lineage>
</organism>
<sequence>MGEKGCESCREWQEHCYREHMDVSRIRFFRLMTGDFAHGISIPEKVADRFSGQITKGFNLKAPSGETWRVSVEKVADELILMSGWEDFAKAHELQENDLLFFTCNGRCNGSFSFDVLIFDASGCEKVSCFFIGKKNSIGGQTQNAEQYHLSDSEDTSTPSTFLVGSPHKASTSKKLNGKTKTNPRKEPEDPNSSRSHVKHEMIEEEKSDDDDEHADYEHADYYYSRFANYLTGEEREEIFSLVSLQPGNPVFVTVLQAPQIHRKGLLIVPSGFAADHLDSRSQEILLMRPNKKEKWYVKYYHASTTRGFNCQRWIKFIRENRLREGYICIFELMKGARRVTMTVHVIGKVDDRFVLLG</sequence>
<name>Y1223_ORYSJ</name>
<reference key="1">
    <citation type="journal article" date="2005" name="BMC Biol.">
        <title>The sequence of rice chromosomes 11 and 12, rich in disease resistance genes and recent gene duplications.</title>
        <authorList>
            <consortium name="The rice chromosomes 11 and 12 sequencing consortia"/>
        </authorList>
    </citation>
    <scope>NUCLEOTIDE SEQUENCE [LARGE SCALE GENOMIC DNA]</scope>
    <source>
        <strain>cv. Nipponbare</strain>
    </source>
</reference>
<reference key="2">
    <citation type="journal article" date="2005" name="Nature">
        <title>The map-based sequence of the rice genome.</title>
        <authorList>
            <consortium name="International rice genome sequencing project (IRGSP)"/>
        </authorList>
    </citation>
    <scope>NUCLEOTIDE SEQUENCE [LARGE SCALE GENOMIC DNA]</scope>
    <source>
        <strain>cv. Nipponbare</strain>
    </source>
</reference>
<reference key="3">
    <citation type="journal article" date="2008" name="Nucleic Acids Res.">
        <title>The rice annotation project database (RAP-DB): 2008 update.</title>
        <authorList>
            <consortium name="The rice annotation project (RAP)"/>
        </authorList>
    </citation>
    <scope>GENOME REANNOTATION</scope>
    <source>
        <strain>cv. Nipponbare</strain>
    </source>
</reference>
<reference key="4">
    <citation type="journal article" date="2013" name="Rice">
        <title>Improvement of the Oryza sativa Nipponbare reference genome using next generation sequence and optical map data.</title>
        <authorList>
            <person name="Kawahara Y."/>
            <person name="de la Bastide M."/>
            <person name="Hamilton J.P."/>
            <person name="Kanamori H."/>
            <person name="McCombie W.R."/>
            <person name="Ouyang S."/>
            <person name="Schwartz D.C."/>
            <person name="Tanaka T."/>
            <person name="Wu J."/>
            <person name="Zhou S."/>
            <person name="Childs K.L."/>
            <person name="Davidson R.M."/>
            <person name="Lin H."/>
            <person name="Quesada-Ocampo L."/>
            <person name="Vaillancourt B."/>
            <person name="Sakai H."/>
            <person name="Lee S.S."/>
            <person name="Kim J."/>
            <person name="Numa H."/>
            <person name="Itoh T."/>
            <person name="Buell C.R."/>
            <person name="Matsumoto T."/>
        </authorList>
    </citation>
    <scope>GENOME REANNOTATION</scope>
    <source>
        <strain>cv. Nipponbare</strain>
    </source>
</reference>
<reference key="5">
    <citation type="journal article" date="2005" name="PLoS Biol.">
        <title>The genomes of Oryza sativa: a history of duplications.</title>
        <authorList>
            <person name="Yu J."/>
            <person name="Wang J."/>
            <person name="Lin W."/>
            <person name="Li S."/>
            <person name="Li H."/>
            <person name="Zhou J."/>
            <person name="Ni P."/>
            <person name="Dong W."/>
            <person name="Hu S."/>
            <person name="Zeng C."/>
            <person name="Zhang J."/>
            <person name="Zhang Y."/>
            <person name="Li R."/>
            <person name="Xu Z."/>
            <person name="Li S."/>
            <person name="Li X."/>
            <person name="Zheng H."/>
            <person name="Cong L."/>
            <person name="Lin L."/>
            <person name="Yin J."/>
            <person name="Geng J."/>
            <person name="Li G."/>
            <person name="Shi J."/>
            <person name="Liu J."/>
            <person name="Lv H."/>
            <person name="Li J."/>
            <person name="Wang J."/>
            <person name="Deng Y."/>
            <person name="Ran L."/>
            <person name="Shi X."/>
            <person name="Wang X."/>
            <person name="Wu Q."/>
            <person name="Li C."/>
            <person name="Ren X."/>
            <person name="Wang J."/>
            <person name="Wang X."/>
            <person name="Li D."/>
            <person name="Liu D."/>
            <person name="Zhang X."/>
            <person name="Ji Z."/>
            <person name="Zhao W."/>
            <person name="Sun Y."/>
            <person name="Zhang Z."/>
            <person name="Bao J."/>
            <person name="Han Y."/>
            <person name="Dong L."/>
            <person name="Ji J."/>
            <person name="Chen P."/>
            <person name="Wu S."/>
            <person name="Liu J."/>
            <person name="Xiao Y."/>
            <person name="Bu D."/>
            <person name="Tan J."/>
            <person name="Yang L."/>
            <person name="Ye C."/>
            <person name="Zhang J."/>
            <person name="Xu J."/>
            <person name="Zhou Y."/>
            <person name="Yu Y."/>
            <person name="Zhang B."/>
            <person name="Zhuang S."/>
            <person name="Wei H."/>
            <person name="Liu B."/>
            <person name="Lei M."/>
            <person name="Yu H."/>
            <person name="Li Y."/>
            <person name="Xu H."/>
            <person name="Wei S."/>
            <person name="He X."/>
            <person name="Fang L."/>
            <person name="Zhang Z."/>
            <person name="Zhang Y."/>
            <person name="Huang X."/>
            <person name="Su Z."/>
            <person name="Tong W."/>
            <person name="Li J."/>
            <person name="Tong Z."/>
            <person name="Li S."/>
            <person name="Ye J."/>
            <person name="Wang L."/>
            <person name="Fang L."/>
            <person name="Lei T."/>
            <person name="Chen C.-S."/>
            <person name="Chen H.-C."/>
            <person name="Xu Z."/>
            <person name="Li H."/>
            <person name="Huang H."/>
            <person name="Zhang F."/>
            <person name="Xu H."/>
            <person name="Li N."/>
            <person name="Zhao C."/>
            <person name="Li S."/>
            <person name="Dong L."/>
            <person name="Huang Y."/>
            <person name="Li L."/>
            <person name="Xi Y."/>
            <person name="Qi Q."/>
            <person name="Li W."/>
            <person name="Zhang B."/>
            <person name="Hu W."/>
            <person name="Zhang Y."/>
            <person name="Tian X."/>
            <person name="Jiao Y."/>
            <person name="Liang X."/>
            <person name="Jin J."/>
            <person name="Gao L."/>
            <person name="Zheng W."/>
            <person name="Hao B."/>
            <person name="Liu S.-M."/>
            <person name="Wang W."/>
            <person name="Yuan L."/>
            <person name="Cao M."/>
            <person name="McDermott J."/>
            <person name="Samudrala R."/>
            <person name="Wang J."/>
            <person name="Wong G.K.-S."/>
            <person name="Yang H."/>
        </authorList>
    </citation>
    <scope>NUCLEOTIDE SEQUENCE [LARGE SCALE GENOMIC DNA]</scope>
    <source>
        <strain>cv. Nipponbare</strain>
    </source>
</reference>
<feature type="chain" id="PRO_0000376994" description="B3 domain-containing protein Os12g0592300">
    <location>
        <begin position="1"/>
        <end position="358"/>
    </location>
</feature>
<feature type="DNA-binding region" description="TF-B3 1" evidence="1">
    <location>
        <begin position="25"/>
        <end position="122"/>
    </location>
</feature>
<feature type="DNA-binding region" description="TF-B3 2" evidence="1">
    <location>
        <begin position="252"/>
        <end position="350"/>
    </location>
</feature>
<feature type="region of interest" description="Disordered" evidence="2">
    <location>
        <begin position="148"/>
        <end position="215"/>
    </location>
</feature>
<feature type="compositionally biased region" description="Polar residues" evidence="2">
    <location>
        <begin position="156"/>
        <end position="181"/>
    </location>
</feature>
<feature type="compositionally biased region" description="Acidic residues" evidence="2">
    <location>
        <begin position="203"/>
        <end position="215"/>
    </location>
</feature>
<accession>Q2QMT2</accession>
<comment type="subcellular location">
    <subcellularLocation>
        <location evidence="1">Nucleus</location>
    </subcellularLocation>
</comment>
<comment type="sequence caution" evidence="3">
    <conflict type="erroneous gene model prediction">
        <sequence resource="EMBL-CDS" id="ABA99159"/>
    </conflict>
</comment>
<comment type="sequence caution" evidence="3">
    <conflict type="erroneous gene model prediction">
        <sequence resource="EMBL-CDS" id="BAF30191"/>
    </conflict>
</comment>
<comment type="sequence caution" evidence="3">
    <conflict type="erroneous gene model prediction">
        <sequence resource="EMBL-CDS" id="EAZ21070"/>
    </conflict>
</comment>
<gene>
    <name type="ordered locus">Os12g0592300</name>
    <name type="ordered locus">LOC_Os12g40120</name>
    <name type="ORF">OsJ_36713</name>
</gene>
<evidence type="ECO:0000255" key="1">
    <source>
        <dbReference type="PROSITE-ProRule" id="PRU00326"/>
    </source>
</evidence>
<evidence type="ECO:0000256" key="2">
    <source>
        <dbReference type="SAM" id="MobiDB-lite"/>
    </source>
</evidence>
<evidence type="ECO:0000305" key="3"/>
<dbReference type="EMBL" id="DP000011">
    <property type="protein sequence ID" value="ABA99159.1"/>
    <property type="status" value="ALT_SEQ"/>
    <property type="molecule type" value="Genomic_DNA"/>
</dbReference>
<dbReference type="EMBL" id="AP008218">
    <property type="protein sequence ID" value="BAF30191.1"/>
    <property type="status" value="ALT_SEQ"/>
    <property type="molecule type" value="Genomic_DNA"/>
</dbReference>
<dbReference type="EMBL" id="AP014968">
    <property type="status" value="NOT_ANNOTATED_CDS"/>
    <property type="molecule type" value="Genomic_DNA"/>
</dbReference>
<dbReference type="EMBL" id="CM000149">
    <property type="protein sequence ID" value="EAZ21070.1"/>
    <property type="status" value="ALT_SEQ"/>
    <property type="molecule type" value="Genomic_DNA"/>
</dbReference>
<dbReference type="RefSeq" id="XP_015619600.1">
    <property type="nucleotide sequence ID" value="XM_015764114.1"/>
</dbReference>
<dbReference type="SMR" id="Q2QMT2"/>
<dbReference type="FunCoup" id="Q2QMT2">
    <property type="interactions" value="2"/>
</dbReference>
<dbReference type="STRING" id="39947.Q2QMT2"/>
<dbReference type="PaxDb" id="39947-Q2QMT2"/>
<dbReference type="GeneID" id="4352681"/>
<dbReference type="KEGG" id="dosa:Os12g0592300"/>
<dbReference type="HOGENOM" id="CLU_1456751_0_0_1"/>
<dbReference type="InParanoid" id="Q2QMT2"/>
<dbReference type="OrthoDB" id="590488at2759"/>
<dbReference type="Proteomes" id="UP000000763">
    <property type="component" value="Chromosome 12"/>
</dbReference>
<dbReference type="Proteomes" id="UP000007752">
    <property type="component" value="Chromosome 12"/>
</dbReference>
<dbReference type="Proteomes" id="UP000059680">
    <property type="component" value="Chromosome 12"/>
</dbReference>
<dbReference type="GO" id="GO:0005634">
    <property type="term" value="C:nucleus"/>
    <property type="evidence" value="ECO:0007669"/>
    <property type="project" value="UniProtKB-SubCell"/>
</dbReference>
<dbReference type="GO" id="GO:0003677">
    <property type="term" value="F:DNA binding"/>
    <property type="evidence" value="ECO:0007669"/>
    <property type="project" value="UniProtKB-KW"/>
</dbReference>
<dbReference type="CDD" id="cd10017">
    <property type="entry name" value="B3_DNA"/>
    <property type="match status" value="2"/>
</dbReference>
<dbReference type="Gene3D" id="2.40.330.10">
    <property type="entry name" value="DNA-binding pseudobarrel domain"/>
    <property type="match status" value="2"/>
</dbReference>
<dbReference type="InterPro" id="IPR003340">
    <property type="entry name" value="B3_DNA-bd"/>
</dbReference>
<dbReference type="InterPro" id="IPR015300">
    <property type="entry name" value="DNA-bd_pseudobarrel_sf"/>
</dbReference>
<dbReference type="InterPro" id="IPR044837">
    <property type="entry name" value="REM16-like"/>
</dbReference>
<dbReference type="PANTHER" id="PTHR31391:SF70">
    <property type="entry name" value="B3 DOMAIN-CONTAINING PROTEIN OS03G0622200"/>
    <property type="match status" value="1"/>
</dbReference>
<dbReference type="PANTHER" id="PTHR31391">
    <property type="entry name" value="B3 DOMAIN-CONTAINING PROTEIN OS11G0197600-RELATED"/>
    <property type="match status" value="1"/>
</dbReference>
<dbReference type="Pfam" id="PF02362">
    <property type="entry name" value="B3"/>
    <property type="match status" value="2"/>
</dbReference>
<dbReference type="SMART" id="SM01019">
    <property type="entry name" value="B3"/>
    <property type="match status" value="2"/>
</dbReference>
<dbReference type="SUPFAM" id="SSF101936">
    <property type="entry name" value="DNA-binding pseudobarrel domain"/>
    <property type="match status" value="2"/>
</dbReference>
<dbReference type="PROSITE" id="PS50863">
    <property type="entry name" value="B3"/>
    <property type="match status" value="2"/>
</dbReference>
<keyword id="KW-0238">DNA-binding</keyword>
<keyword id="KW-0539">Nucleus</keyword>
<keyword id="KW-1185">Reference proteome</keyword>
<keyword id="KW-0677">Repeat</keyword>
<keyword id="KW-0804">Transcription</keyword>
<keyword id="KW-0805">Transcription regulation</keyword>
<protein>
    <recommendedName>
        <fullName>B3 domain-containing protein Os12g0592300</fullName>
    </recommendedName>
</protein>
<proteinExistence type="evidence at transcript level"/>